<keyword id="KW-1185">Reference proteome</keyword>
<keyword id="KW-0687">Ribonucleoprotein</keyword>
<keyword id="KW-0689">Ribosomal protein</keyword>
<keyword id="KW-0694">RNA-binding</keyword>
<keyword id="KW-0699">rRNA-binding</keyword>
<keyword id="KW-0820">tRNA-binding</keyword>
<protein>
    <recommendedName>
        <fullName evidence="1">Large ribosomal subunit protein uL5</fullName>
    </recommendedName>
    <alternativeName>
        <fullName evidence="2">50S ribosomal protein L5</fullName>
    </alternativeName>
</protein>
<gene>
    <name evidence="1" type="primary">rplE</name>
    <name type="ordered locus">BPSL3201</name>
</gene>
<feature type="chain" id="PRO_0000242979" description="Large ribosomal subunit protein uL5">
    <location>
        <begin position="1"/>
        <end position="179"/>
    </location>
</feature>
<sequence>MARFQEFYKEKVVPGLIEKFGYKSVMEVPRITKITLNMGLGEAVADKKIIENAVGDLTKIAGQKPVVTKARKAIAGFKIRQGYPIGAMVTLRGRAMYEFLDRFVTVALPRVRDFRGVSGRAFDGRGNYNIGVKEQIIFPEIDYDKIDALRGLNISITTTAKTDDEAKALLASFKFPFRN</sequence>
<accession>Q63Q23</accession>
<dbReference type="EMBL" id="BX571965">
    <property type="protein sequence ID" value="CAH37212.1"/>
    <property type="molecule type" value="Genomic_DNA"/>
</dbReference>
<dbReference type="RefSeq" id="WP_004202757.1">
    <property type="nucleotide sequence ID" value="NZ_CP009538.1"/>
</dbReference>
<dbReference type="RefSeq" id="YP_109795.1">
    <property type="nucleotide sequence ID" value="NC_006350.1"/>
</dbReference>
<dbReference type="SMR" id="Q63Q23"/>
<dbReference type="STRING" id="272560.BPSL3201"/>
<dbReference type="GeneID" id="93061820"/>
<dbReference type="KEGG" id="bps:BPSL3201"/>
<dbReference type="PATRIC" id="fig|272560.51.peg.2037"/>
<dbReference type="eggNOG" id="COG0094">
    <property type="taxonomic scope" value="Bacteria"/>
</dbReference>
<dbReference type="Proteomes" id="UP000000605">
    <property type="component" value="Chromosome 1"/>
</dbReference>
<dbReference type="GO" id="GO:1990904">
    <property type="term" value="C:ribonucleoprotein complex"/>
    <property type="evidence" value="ECO:0007669"/>
    <property type="project" value="UniProtKB-KW"/>
</dbReference>
<dbReference type="GO" id="GO:0005840">
    <property type="term" value="C:ribosome"/>
    <property type="evidence" value="ECO:0007669"/>
    <property type="project" value="UniProtKB-KW"/>
</dbReference>
<dbReference type="GO" id="GO:0019843">
    <property type="term" value="F:rRNA binding"/>
    <property type="evidence" value="ECO:0007669"/>
    <property type="project" value="UniProtKB-UniRule"/>
</dbReference>
<dbReference type="GO" id="GO:0003735">
    <property type="term" value="F:structural constituent of ribosome"/>
    <property type="evidence" value="ECO:0007669"/>
    <property type="project" value="InterPro"/>
</dbReference>
<dbReference type="GO" id="GO:0000049">
    <property type="term" value="F:tRNA binding"/>
    <property type="evidence" value="ECO:0007669"/>
    <property type="project" value="UniProtKB-UniRule"/>
</dbReference>
<dbReference type="GO" id="GO:0006412">
    <property type="term" value="P:translation"/>
    <property type="evidence" value="ECO:0007669"/>
    <property type="project" value="UniProtKB-UniRule"/>
</dbReference>
<dbReference type="FunFam" id="3.30.1440.10:FF:000001">
    <property type="entry name" value="50S ribosomal protein L5"/>
    <property type="match status" value="1"/>
</dbReference>
<dbReference type="Gene3D" id="3.30.1440.10">
    <property type="match status" value="1"/>
</dbReference>
<dbReference type="HAMAP" id="MF_01333_B">
    <property type="entry name" value="Ribosomal_uL5_B"/>
    <property type="match status" value="1"/>
</dbReference>
<dbReference type="InterPro" id="IPR002132">
    <property type="entry name" value="Ribosomal_uL5"/>
</dbReference>
<dbReference type="InterPro" id="IPR020930">
    <property type="entry name" value="Ribosomal_uL5_bac-type"/>
</dbReference>
<dbReference type="InterPro" id="IPR031309">
    <property type="entry name" value="Ribosomal_uL5_C"/>
</dbReference>
<dbReference type="InterPro" id="IPR020929">
    <property type="entry name" value="Ribosomal_uL5_CS"/>
</dbReference>
<dbReference type="InterPro" id="IPR022803">
    <property type="entry name" value="Ribosomal_uL5_dom_sf"/>
</dbReference>
<dbReference type="InterPro" id="IPR031310">
    <property type="entry name" value="Ribosomal_uL5_N"/>
</dbReference>
<dbReference type="NCBIfam" id="NF000585">
    <property type="entry name" value="PRK00010.1"/>
    <property type="match status" value="1"/>
</dbReference>
<dbReference type="PANTHER" id="PTHR11994">
    <property type="entry name" value="60S RIBOSOMAL PROTEIN L11-RELATED"/>
    <property type="match status" value="1"/>
</dbReference>
<dbReference type="Pfam" id="PF00281">
    <property type="entry name" value="Ribosomal_L5"/>
    <property type="match status" value="1"/>
</dbReference>
<dbReference type="Pfam" id="PF00673">
    <property type="entry name" value="Ribosomal_L5_C"/>
    <property type="match status" value="1"/>
</dbReference>
<dbReference type="PIRSF" id="PIRSF002161">
    <property type="entry name" value="Ribosomal_L5"/>
    <property type="match status" value="1"/>
</dbReference>
<dbReference type="SUPFAM" id="SSF55282">
    <property type="entry name" value="RL5-like"/>
    <property type="match status" value="1"/>
</dbReference>
<dbReference type="PROSITE" id="PS00358">
    <property type="entry name" value="RIBOSOMAL_L5"/>
    <property type="match status" value="1"/>
</dbReference>
<proteinExistence type="inferred from homology"/>
<reference key="1">
    <citation type="journal article" date="2004" name="Proc. Natl. Acad. Sci. U.S.A.">
        <title>Genomic plasticity of the causative agent of melioidosis, Burkholderia pseudomallei.</title>
        <authorList>
            <person name="Holden M.T.G."/>
            <person name="Titball R.W."/>
            <person name="Peacock S.J."/>
            <person name="Cerdeno-Tarraga A.-M."/>
            <person name="Atkins T."/>
            <person name="Crossman L.C."/>
            <person name="Pitt T."/>
            <person name="Churcher C."/>
            <person name="Mungall K.L."/>
            <person name="Bentley S.D."/>
            <person name="Sebaihia M."/>
            <person name="Thomson N.R."/>
            <person name="Bason N."/>
            <person name="Beacham I.R."/>
            <person name="Brooks K."/>
            <person name="Brown K.A."/>
            <person name="Brown N.F."/>
            <person name="Challis G.L."/>
            <person name="Cherevach I."/>
            <person name="Chillingworth T."/>
            <person name="Cronin A."/>
            <person name="Crossett B."/>
            <person name="Davis P."/>
            <person name="DeShazer D."/>
            <person name="Feltwell T."/>
            <person name="Fraser A."/>
            <person name="Hance Z."/>
            <person name="Hauser H."/>
            <person name="Holroyd S."/>
            <person name="Jagels K."/>
            <person name="Keith K.E."/>
            <person name="Maddison M."/>
            <person name="Moule S."/>
            <person name="Price C."/>
            <person name="Quail M.A."/>
            <person name="Rabbinowitsch E."/>
            <person name="Rutherford K."/>
            <person name="Sanders M."/>
            <person name="Simmonds M."/>
            <person name="Songsivilai S."/>
            <person name="Stevens K."/>
            <person name="Tumapa S."/>
            <person name="Vesaratchavest M."/>
            <person name="Whitehead S."/>
            <person name="Yeats C."/>
            <person name="Barrell B.G."/>
            <person name="Oyston P.C.F."/>
            <person name="Parkhill J."/>
        </authorList>
    </citation>
    <scope>NUCLEOTIDE SEQUENCE [LARGE SCALE GENOMIC DNA]</scope>
    <source>
        <strain>K96243</strain>
    </source>
</reference>
<evidence type="ECO:0000255" key="1">
    <source>
        <dbReference type="HAMAP-Rule" id="MF_01333"/>
    </source>
</evidence>
<evidence type="ECO:0000305" key="2"/>
<comment type="function">
    <text evidence="1">This is one of the proteins that bind and probably mediate the attachment of the 5S RNA into the large ribosomal subunit, where it forms part of the central protuberance. In the 70S ribosome it contacts protein S13 of the 30S subunit (bridge B1b), connecting the 2 subunits; this bridge is implicated in subunit movement. Contacts the P site tRNA; the 5S rRNA and some of its associated proteins might help stabilize positioning of ribosome-bound tRNAs.</text>
</comment>
<comment type="subunit">
    <text evidence="1">Part of the 50S ribosomal subunit; part of the 5S rRNA/L5/L18/L25 subcomplex. Contacts the 5S rRNA and the P site tRNA. Forms a bridge to the 30S subunit in the 70S ribosome.</text>
</comment>
<comment type="similarity">
    <text evidence="1">Belongs to the universal ribosomal protein uL5 family.</text>
</comment>
<organism>
    <name type="scientific">Burkholderia pseudomallei (strain K96243)</name>
    <dbReference type="NCBI Taxonomy" id="272560"/>
    <lineage>
        <taxon>Bacteria</taxon>
        <taxon>Pseudomonadati</taxon>
        <taxon>Pseudomonadota</taxon>
        <taxon>Betaproteobacteria</taxon>
        <taxon>Burkholderiales</taxon>
        <taxon>Burkholderiaceae</taxon>
        <taxon>Burkholderia</taxon>
        <taxon>pseudomallei group</taxon>
    </lineage>
</organism>
<name>RL5_BURPS</name>